<reference key="1">
    <citation type="journal article" date="2004" name="J. Mol. Microbiol. Biotechnol.">
        <title>The complete genome sequence of Bacillus licheniformis DSM13, an organism with great industrial potential.</title>
        <authorList>
            <person name="Veith B."/>
            <person name="Herzberg C."/>
            <person name="Steckel S."/>
            <person name="Feesche J."/>
            <person name="Maurer K.H."/>
            <person name="Ehrenreich P."/>
            <person name="Baeumer S."/>
            <person name="Henne A."/>
            <person name="Liesegang H."/>
            <person name="Merkl R."/>
            <person name="Ehrenreich A."/>
            <person name="Gottschalk G."/>
        </authorList>
    </citation>
    <scope>NUCLEOTIDE SEQUENCE [LARGE SCALE GENOMIC DNA]</scope>
    <source>
        <strain>ATCC 14580 / DSM 13 / JCM 2505 / CCUG 7422 / NBRC 12200 / NCIMB 9375 / NCTC 10341 / NRRL NRS-1264 / Gibson 46</strain>
    </source>
</reference>
<reference key="2">
    <citation type="journal article" date="2004" name="Genome Biol.">
        <title>Complete genome sequence of the industrial bacterium Bacillus licheniformis and comparisons with closely related Bacillus species.</title>
        <authorList>
            <person name="Rey M.W."/>
            <person name="Ramaiya P."/>
            <person name="Nelson B.A."/>
            <person name="Brody-Karpin S.D."/>
            <person name="Zaretsky E.J."/>
            <person name="Tang M."/>
            <person name="Lopez de Leon A."/>
            <person name="Xiang H."/>
            <person name="Gusti V."/>
            <person name="Clausen I.G."/>
            <person name="Olsen P.B."/>
            <person name="Rasmussen M.D."/>
            <person name="Andersen J.T."/>
            <person name="Joergensen P.L."/>
            <person name="Larsen T.S."/>
            <person name="Sorokin A."/>
            <person name="Bolotin A."/>
            <person name="Lapidus A."/>
            <person name="Galleron N."/>
            <person name="Ehrlich S.D."/>
            <person name="Berka R.M."/>
        </authorList>
    </citation>
    <scope>NUCLEOTIDE SEQUENCE [LARGE SCALE GENOMIC DNA]</scope>
    <source>
        <strain>ATCC 14580 / DSM 13 / JCM 2505 / CCUG 7422 / NBRC 12200 / NCIMB 9375 / NCTC 10341 / NRRL NRS-1264 / Gibson 46</strain>
    </source>
</reference>
<gene>
    <name evidence="1" type="primary">thiG</name>
    <name type="ordered locus">BLi01263</name>
    <name type="ordered locus">BL01588</name>
</gene>
<feature type="chain" id="PRO_0000162786" description="Thiazole synthase">
    <location>
        <begin position="1"/>
        <end position="255"/>
    </location>
</feature>
<feature type="active site" description="Schiff-base intermediate with DXP" evidence="1">
    <location>
        <position position="96"/>
    </location>
</feature>
<feature type="binding site" evidence="1">
    <location>
        <position position="157"/>
    </location>
    <ligand>
        <name>1-deoxy-D-xylulose 5-phosphate</name>
        <dbReference type="ChEBI" id="CHEBI:57792"/>
    </ligand>
</feature>
<feature type="binding site" evidence="1">
    <location>
        <begin position="183"/>
        <end position="184"/>
    </location>
    <ligand>
        <name>1-deoxy-D-xylulose 5-phosphate</name>
        <dbReference type="ChEBI" id="CHEBI:57792"/>
    </ligand>
</feature>
<feature type="binding site" evidence="1">
    <location>
        <begin position="205"/>
        <end position="206"/>
    </location>
    <ligand>
        <name>1-deoxy-D-xylulose 5-phosphate</name>
        <dbReference type="ChEBI" id="CHEBI:57792"/>
    </ligand>
</feature>
<sequence length="255" mass="27253">MLKIADRQFSSRLLLGTGKYPSFEIQKEAVSASESEILTFAVRRMNIFEESQPNFLEQLDLSRYTLLPNTAGAKTAEEAVRIAKLAKASGLCDMIKVEVIGCDRSLLPDPVETLKASETLLEEGFIVLPYTSDDVVLARKLEELGVHAIMPGASPIGSGQGIINPLNLSFIIEQAKVPVIVDAGIGSPKDAAYAMELGADGVLLNTAVSGAKDPVQMAKAMKFAVEAGRLGYLAGRIPEKNYGIASSPEEGKLTI</sequence>
<evidence type="ECO:0000255" key="1">
    <source>
        <dbReference type="HAMAP-Rule" id="MF_00443"/>
    </source>
</evidence>
<dbReference type="EC" id="2.8.1.10" evidence="1"/>
<dbReference type="EMBL" id="CP000002">
    <property type="protein sequence ID" value="AAU22825.1"/>
    <property type="molecule type" value="Genomic_DNA"/>
</dbReference>
<dbReference type="EMBL" id="AE017333">
    <property type="protein sequence ID" value="AAU40170.1"/>
    <property type="molecule type" value="Genomic_DNA"/>
</dbReference>
<dbReference type="RefSeq" id="WP_011197777.1">
    <property type="nucleotide sequence ID" value="NC_006322.1"/>
</dbReference>
<dbReference type="SMR" id="Q65L94"/>
<dbReference type="STRING" id="279010.BL01588"/>
<dbReference type="KEGG" id="bld:BLi01263"/>
<dbReference type="KEGG" id="bli:BL01588"/>
<dbReference type="PATRIC" id="fig|279010.13.peg.1251"/>
<dbReference type="eggNOG" id="COG2022">
    <property type="taxonomic scope" value="Bacteria"/>
</dbReference>
<dbReference type="HOGENOM" id="CLU_062233_1_0_9"/>
<dbReference type="UniPathway" id="UPA00060"/>
<dbReference type="Proteomes" id="UP000000606">
    <property type="component" value="Chromosome"/>
</dbReference>
<dbReference type="GO" id="GO:0005737">
    <property type="term" value="C:cytoplasm"/>
    <property type="evidence" value="ECO:0007669"/>
    <property type="project" value="UniProtKB-SubCell"/>
</dbReference>
<dbReference type="GO" id="GO:1990107">
    <property type="term" value="F:thiazole synthase activity"/>
    <property type="evidence" value="ECO:0007669"/>
    <property type="project" value="UniProtKB-EC"/>
</dbReference>
<dbReference type="GO" id="GO:0009229">
    <property type="term" value="P:thiamine diphosphate biosynthetic process"/>
    <property type="evidence" value="ECO:0007669"/>
    <property type="project" value="UniProtKB-UniRule"/>
</dbReference>
<dbReference type="CDD" id="cd04728">
    <property type="entry name" value="ThiG"/>
    <property type="match status" value="1"/>
</dbReference>
<dbReference type="FunFam" id="3.20.20.70:FF:000049">
    <property type="entry name" value="Thiazole synthase"/>
    <property type="match status" value="1"/>
</dbReference>
<dbReference type="Gene3D" id="3.20.20.70">
    <property type="entry name" value="Aldolase class I"/>
    <property type="match status" value="1"/>
</dbReference>
<dbReference type="HAMAP" id="MF_00443">
    <property type="entry name" value="ThiG"/>
    <property type="match status" value="1"/>
</dbReference>
<dbReference type="InterPro" id="IPR013785">
    <property type="entry name" value="Aldolase_TIM"/>
</dbReference>
<dbReference type="InterPro" id="IPR033983">
    <property type="entry name" value="Thiazole_synthase_ThiG"/>
</dbReference>
<dbReference type="InterPro" id="IPR008867">
    <property type="entry name" value="ThiG"/>
</dbReference>
<dbReference type="PANTHER" id="PTHR34266">
    <property type="entry name" value="THIAZOLE SYNTHASE"/>
    <property type="match status" value="1"/>
</dbReference>
<dbReference type="PANTHER" id="PTHR34266:SF2">
    <property type="entry name" value="THIAZOLE SYNTHASE"/>
    <property type="match status" value="1"/>
</dbReference>
<dbReference type="Pfam" id="PF05690">
    <property type="entry name" value="ThiG"/>
    <property type="match status" value="1"/>
</dbReference>
<dbReference type="SUPFAM" id="SSF110399">
    <property type="entry name" value="ThiG-like"/>
    <property type="match status" value="1"/>
</dbReference>
<proteinExistence type="inferred from homology"/>
<name>THIG_BACLD</name>
<protein>
    <recommendedName>
        <fullName evidence="1">Thiazole synthase</fullName>
        <ecNumber evidence="1">2.8.1.10</ecNumber>
    </recommendedName>
</protein>
<accession>Q65L94</accession>
<accession>Q62WN3</accession>
<organism>
    <name type="scientific">Bacillus licheniformis (strain ATCC 14580 / DSM 13 / JCM 2505 / CCUG 7422 / NBRC 12200 / NCIMB 9375 / NCTC 10341 / NRRL NRS-1264 / Gibson 46)</name>
    <dbReference type="NCBI Taxonomy" id="279010"/>
    <lineage>
        <taxon>Bacteria</taxon>
        <taxon>Bacillati</taxon>
        <taxon>Bacillota</taxon>
        <taxon>Bacilli</taxon>
        <taxon>Bacillales</taxon>
        <taxon>Bacillaceae</taxon>
        <taxon>Bacillus</taxon>
    </lineage>
</organism>
<comment type="function">
    <text evidence="1">Catalyzes the rearrangement of 1-deoxy-D-xylulose 5-phosphate (DXP) to produce the thiazole phosphate moiety of thiamine. Sulfur is provided by the thiocarboxylate moiety of the carrier protein ThiS. In vitro, sulfur can be provided by H(2)S.</text>
</comment>
<comment type="catalytic activity">
    <reaction evidence="1">
        <text>[ThiS sulfur-carrier protein]-C-terminal-Gly-aminoethanethioate + 2-iminoacetate + 1-deoxy-D-xylulose 5-phosphate = [ThiS sulfur-carrier protein]-C-terminal Gly-Gly + 2-[(2R,5Z)-2-carboxy-4-methylthiazol-5(2H)-ylidene]ethyl phosphate + 2 H2O + H(+)</text>
        <dbReference type="Rhea" id="RHEA:26297"/>
        <dbReference type="Rhea" id="RHEA-COMP:12909"/>
        <dbReference type="Rhea" id="RHEA-COMP:19908"/>
        <dbReference type="ChEBI" id="CHEBI:15377"/>
        <dbReference type="ChEBI" id="CHEBI:15378"/>
        <dbReference type="ChEBI" id="CHEBI:57792"/>
        <dbReference type="ChEBI" id="CHEBI:62899"/>
        <dbReference type="ChEBI" id="CHEBI:77846"/>
        <dbReference type="ChEBI" id="CHEBI:90778"/>
        <dbReference type="ChEBI" id="CHEBI:232372"/>
        <dbReference type="EC" id="2.8.1.10"/>
    </reaction>
</comment>
<comment type="pathway">
    <text evidence="1">Cofactor biosynthesis; thiamine diphosphate biosynthesis.</text>
</comment>
<comment type="subunit">
    <text evidence="1">Homotetramer. Forms heterodimers with either ThiH or ThiS.</text>
</comment>
<comment type="subcellular location">
    <subcellularLocation>
        <location evidence="1">Cytoplasm</location>
    </subcellularLocation>
</comment>
<comment type="similarity">
    <text evidence="1">Belongs to the ThiG family.</text>
</comment>
<keyword id="KW-0963">Cytoplasm</keyword>
<keyword id="KW-1185">Reference proteome</keyword>
<keyword id="KW-0704">Schiff base</keyword>
<keyword id="KW-0784">Thiamine biosynthesis</keyword>
<keyword id="KW-0808">Transferase</keyword>